<protein>
    <recommendedName>
        <fullName evidence="2">Small ribosomal subunit protein uS12</fullName>
    </recommendedName>
    <alternativeName>
        <fullName evidence="3">30S ribosomal protein S12</fullName>
    </alternativeName>
</protein>
<keyword id="KW-0488">Methylation</keyword>
<keyword id="KW-0687">Ribonucleoprotein</keyword>
<keyword id="KW-0689">Ribosomal protein</keyword>
<keyword id="KW-0694">RNA-binding</keyword>
<keyword id="KW-0699">rRNA-binding</keyword>
<keyword id="KW-0820">tRNA-binding</keyword>
<evidence type="ECO:0000250" key="1"/>
<evidence type="ECO:0000255" key="2">
    <source>
        <dbReference type="HAMAP-Rule" id="MF_00403"/>
    </source>
</evidence>
<evidence type="ECO:0000305" key="3"/>
<comment type="function">
    <text evidence="2">With S4 and S5 plays an important role in translational accuracy.</text>
</comment>
<comment type="function">
    <text evidence="2">Interacts with and stabilizes bases of the 16S rRNA that are involved in tRNA selection in the A site and with the mRNA backbone. Located at the interface of the 30S and 50S subunits, it traverses the body of the 30S subunit contacting proteins on the other side and probably holding the rRNA structure together. The combined cluster of proteins S8, S12 and S17 appears to hold together the shoulder and platform of the 30S subunit.</text>
</comment>
<comment type="subunit">
    <text evidence="2">Part of the 30S ribosomal subunit. Contacts proteins S8 and S17. May interact with IF1 in the 30S initiation complex.</text>
</comment>
<comment type="similarity">
    <text evidence="2">Belongs to the universal ribosomal protein uS12 family.</text>
</comment>
<sequence length="125" mass="13614">MPTISQLVRKGRKTIASASDSPALKECPQKRGVCTVVKTTTPKKPNSALRKVARIRLTNGYEVTAYIPGVGHNLQEHSVVLIRGGRVKDLPGVRYHIVRGALDAAGVANRMQSRSKYGAKKPKQK</sequence>
<reference key="1">
    <citation type="journal article" date="2007" name="PLoS ONE">
        <title>Analysis of the neurotoxin complex genes in Clostridium botulinum A1-A4 and B1 strains: BoNT/A3, /Ba4 and /B1 clusters are located within plasmids.</title>
        <authorList>
            <person name="Smith T.J."/>
            <person name="Hill K.K."/>
            <person name="Foley B.T."/>
            <person name="Detter J.C."/>
            <person name="Munk A.C."/>
            <person name="Bruce D.C."/>
            <person name="Doggett N.A."/>
            <person name="Smith L.A."/>
            <person name="Marks J.D."/>
            <person name="Xie G."/>
            <person name="Brettin T.S."/>
        </authorList>
    </citation>
    <scope>NUCLEOTIDE SEQUENCE [LARGE SCALE GENOMIC DNA]</scope>
    <source>
        <strain>Loch Maree / Type A3</strain>
    </source>
</reference>
<gene>
    <name evidence="2" type="primary">rpsL</name>
    <name type="ordered locus">CLK_2929</name>
</gene>
<feature type="chain" id="PRO_1000194147" description="Small ribosomal subunit protein uS12">
    <location>
        <begin position="1"/>
        <end position="125"/>
    </location>
</feature>
<feature type="modified residue" description="3-methylthioaspartic acid" evidence="1">
    <location>
        <position position="89"/>
    </location>
</feature>
<proteinExistence type="inferred from homology"/>
<organism>
    <name type="scientific">Clostridium botulinum (strain Loch Maree / Type A3)</name>
    <dbReference type="NCBI Taxonomy" id="498214"/>
    <lineage>
        <taxon>Bacteria</taxon>
        <taxon>Bacillati</taxon>
        <taxon>Bacillota</taxon>
        <taxon>Clostridia</taxon>
        <taxon>Eubacteriales</taxon>
        <taxon>Clostridiaceae</taxon>
        <taxon>Clostridium</taxon>
    </lineage>
</organism>
<name>RS12_CLOBM</name>
<accession>B1KSN0</accession>
<dbReference type="EMBL" id="CP000962">
    <property type="protein sequence ID" value="ACA56710.1"/>
    <property type="molecule type" value="Genomic_DNA"/>
</dbReference>
<dbReference type="RefSeq" id="WP_003357676.1">
    <property type="nucleotide sequence ID" value="NC_010520.1"/>
</dbReference>
<dbReference type="SMR" id="B1KSN0"/>
<dbReference type="GeneID" id="92940255"/>
<dbReference type="KEGG" id="cbl:CLK_2929"/>
<dbReference type="HOGENOM" id="CLU_104295_1_2_9"/>
<dbReference type="GO" id="GO:0015935">
    <property type="term" value="C:small ribosomal subunit"/>
    <property type="evidence" value="ECO:0007669"/>
    <property type="project" value="InterPro"/>
</dbReference>
<dbReference type="GO" id="GO:0019843">
    <property type="term" value="F:rRNA binding"/>
    <property type="evidence" value="ECO:0007669"/>
    <property type="project" value="UniProtKB-UniRule"/>
</dbReference>
<dbReference type="GO" id="GO:0003735">
    <property type="term" value="F:structural constituent of ribosome"/>
    <property type="evidence" value="ECO:0007669"/>
    <property type="project" value="InterPro"/>
</dbReference>
<dbReference type="GO" id="GO:0000049">
    <property type="term" value="F:tRNA binding"/>
    <property type="evidence" value="ECO:0007669"/>
    <property type="project" value="UniProtKB-UniRule"/>
</dbReference>
<dbReference type="GO" id="GO:0006412">
    <property type="term" value="P:translation"/>
    <property type="evidence" value="ECO:0007669"/>
    <property type="project" value="UniProtKB-UniRule"/>
</dbReference>
<dbReference type="CDD" id="cd03368">
    <property type="entry name" value="Ribosomal_S12"/>
    <property type="match status" value="1"/>
</dbReference>
<dbReference type="FunFam" id="2.40.50.140:FF:000001">
    <property type="entry name" value="30S ribosomal protein S12"/>
    <property type="match status" value="1"/>
</dbReference>
<dbReference type="Gene3D" id="2.40.50.140">
    <property type="entry name" value="Nucleic acid-binding proteins"/>
    <property type="match status" value="1"/>
</dbReference>
<dbReference type="HAMAP" id="MF_00403_B">
    <property type="entry name" value="Ribosomal_uS12_B"/>
    <property type="match status" value="1"/>
</dbReference>
<dbReference type="InterPro" id="IPR012340">
    <property type="entry name" value="NA-bd_OB-fold"/>
</dbReference>
<dbReference type="InterPro" id="IPR006032">
    <property type="entry name" value="Ribosomal_uS12"/>
</dbReference>
<dbReference type="InterPro" id="IPR005679">
    <property type="entry name" value="Ribosomal_uS12_bac"/>
</dbReference>
<dbReference type="NCBIfam" id="TIGR00981">
    <property type="entry name" value="rpsL_bact"/>
    <property type="match status" value="1"/>
</dbReference>
<dbReference type="PANTHER" id="PTHR11652">
    <property type="entry name" value="30S RIBOSOMAL PROTEIN S12 FAMILY MEMBER"/>
    <property type="match status" value="1"/>
</dbReference>
<dbReference type="Pfam" id="PF00164">
    <property type="entry name" value="Ribosom_S12_S23"/>
    <property type="match status" value="1"/>
</dbReference>
<dbReference type="PIRSF" id="PIRSF002133">
    <property type="entry name" value="Ribosomal_S12/S23"/>
    <property type="match status" value="1"/>
</dbReference>
<dbReference type="PRINTS" id="PR01034">
    <property type="entry name" value="RIBOSOMALS12"/>
</dbReference>
<dbReference type="SUPFAM" id="SSF50249">
    <property type="entry name" value="Nucleic acid-binding proteins"/>
    <property type="match status" value="1"/>
</dbReference>
<dbReference type="PROSITE" id="PS00055">
    <property type="entry name" value="RIBOSOMAL_S12"/>
    <property type="match status" value="1"/>
</dbReference>